<dbReference type="EC" id="6.1.1.19" evidence="1"/>
<dbReference type="EMBL" id="CP000527">
    <property type="protein sequence ID" value="ABM28831.1"/>
    <property type="molecule type" value="Genomic_DNA"/>
</dbReference>
<dbReference type="RefSeq" id="WP_011792484.1">
    <property type="nucleotide sequence ID" value="NC_008751.1"/>
</dbReference>
<dbReference type="SMR" id="A1VEG5"/>
<dbReference type="KEGG" id="dvl:Dvul_1814"/>
<dbReference type="HOGENOM" id="CLU_006406_0_1_7"/>
<dbReference type="Proteomes" id="UP000009173">
    <property type="component" value="Chromosome"/>
</dbReference>
<dbReference type="GO" id="GO:0005737">
    <property type="term" value="C:cytoplasm"/>
    <property type="evidence" value="ECO:0007669"/>
    <property type="project" value="UniProtKB-SubCell"/>
</dbReference>
<dbReference type="GO" id="GO:0004814">
    <property type="term" value="F:arginine-tRNA ligase activity"/>
    <property type="evidence" value="ECO:0007669"/>
    <property type="project" value="UniProtKB-UniRule"/>
</dbReference>
<dbReference type="GO" id="GO:0005524">
    <property type="term" value="F:ATP binding"/>
    <property type="evidence" value="ECO:0007669"/>
    <property type="project" value="UniProtKB-UniRule"/>
</dbReference>
<dbReference type="GO" id="GO:0006420">
    <property type="term" value="P:arginyl-tRNA aminoacylation"/>
    <property type="evidence" value="ECO:0007669"/>
    <property type="project" value="UniProtKB-UniRule"/>
</dbReference>
<dbReference type="CDD" id="cd00671">
    <property type="entry name" value="ArgRS_core"/>
    <property type="match status" value="1"/>
</dbReference>
<dbReference type="FunFam" id="1.10.730.10:FF:000008">
    <property type="entry name" value="Arginine--tRNA ligase"/>
    <property type="match status" value="1"/>
</dbReference>
<dbReference type="FunFam" id="3.40.50.620:FF:000062">
    <property type="entry name" value="Arginine--tRNA ligase"/>
    <property type="match status" value="1"/>
</dbReference>
<dbReference type="Gene3D" id="3.30.1360.70">
    <property type="entry name" value="Arginyl tRNA synthetase N-terminal domain"/>
    <property type="match status" value="1"/>
</dbReference>
<dbReference type="Gene3D" id="3.40.50.620">
    <property type="entry name" value="HUPs"/>
    <property type="match status" value="1"/>
</dbReference>
<dbReference type="Gene3D" id="1.10.730.10">
    <property type="entry name" value="Isoleucyl-tRNA Synthetase, Domain 1"/>
    <property type="match status" value="1"/>
</dbReference>
<dbReference type="HAMAP" id="MF_00123">
    <property type="entry name" value="Arg_tRNA_synth"/>
    <property type="match status" value="1"/>
</dbReference>
<dbReference type="InterPro" id="IPR001412">
    <property type="entry name" value="aa-tRNA-synth_I_CS"/>
</dbReference>
<dbReference type="InterPro" id="IPR001278">
    <property type="entry name" value="Arg-tRNA-ligase"/>
</dbReference>
<dbReference type="InterPro" id="IPR005148">
    <property type="entry name" value="Arg-tRNA-synth_N"/>
</dbReference>
<dbReference type="InterPro" id="IPR036695">
    <property type="entry name" value="Arg-tRNA-synth_N_sf"/>
</dbReference>
<dbReference type="InterPro" id="IPR035684">
    <property type="entry name" value="ArgRS_core"/>
</dbReference>
<dbReference type="InterPro" id="IPR008909">
    <property type="entry name" value="DALR_anticod-bd"/>
</dbReference>
<dbReference type="InterPro" id="IPR014729">
    <property type="entry name" value="Rossmann-like_a/b/a_fold"/>
</dbReference>
<dbReference type="InterPro" id="IPR009080">
    <property type="entry name" value="tRNAsynth_Ia_anticodon-bd"/>
</dbReference>
<dbReference type="NCBIfam" id="TIGR00456">
    <property type="entry name" value="argS"/>
    <property type="match status" value="1"/>
</dbReference>
<dbReference type="PANTHER" id="PTHR11956:SF5">
    <property type="entry name" value="ARGININE--TRNA LIGASE, CYTOPLASMIC"/>
    <property type="match status" value="1"/>
</dbReference>
<dbReference type="PANTHER" id="PTHR11956">
    <property type="entry name" value="ARGINYL-TRNA SYNTHETASE"/>
    <property type="match status" value="1"/>
</dbReference>
<dbReference type="Pfam" id="PF03485">
    <property type="entry name" value="Arg_tRNA_synt_N"/>
    <property type="match status" value="1"/>
</dbReference>
<dbReference type="Pfam" id="PF05746">
    <property type="entry name" value="DALR_1"/>
    <property type="match status" value="1"/>
</dbReference>
<dbReference type="Pfam" id="PF00750">
    <property type="entry name" value="tRNA-synt_1d"/>
    <property type="match status" value="1"/>
</dbReference>
<dbReference type="PRINTS" id="PR01038">
    <property type="entry name" value="TRNASYNTHARG"/>
</dbReference>
<dbReference type="SMART" id="SM01016">
    <property type="entry name" value="Arg_tRNA_synt_N"/>
    <property type="match status" value="1"/>
</dbReference>
<dbReference type="SMART" id="SM00836">
    <property type="entry name" value="DALR_1"/>
    <property type="match status" value="1"/>
</dbReference>
<dbReference type="SUPFAM" id="SSF47323">
    <property type="entry name" value="Anticodon-binding domain of a subclass of class I aminoacyl-tRNA synthetases"/>
    <property type="match status" value="1"/>
</dbReference>
<dbReference type="SUPFAM" id="SSF55190">
    <property type="entry name" value="Arginyl-tRNA synthetase (ArgRS), N-terminal 'additional' domain"/>
    <property type="match status" value="1"/>
</dbReference>
<dbReference type="SUPFAM" id="SSF52374">
    <property type="entry name" value="Nucleotidylyl transferase"/>
    <property type="match status" value="1"/>
</dbReference>
<dbReference type="PROSITE" id="PS00178">
    <property type="entry name" value="AA_TRNA_LIGASE_I"/>
    <property type="match status" value="1"/>
</dbReference>
<name>SYR_NITV4</name>
<reference key="1">
    <citation type="journal article" date="2009" name="Environ. Microbiol.">
        <title>Contribution of mobile genetic elements to Desulfovibrio vulgaris genome plasticity.</title>
        <authorList>
            <person name="Walker C.B."/>
            <person name="Stolyar S."/>
            <person name="Chivian D."/>
            <person name="Pinel N."/>
            <person name="Gabster J.A."/>
            <person name="Dehal P.S."/>
            <person name="He Z."/>
            <person name="Yang Z.K."/>
            <person name="Yen H.C."/>
            <person name="Zhou J."/>
            <person name="Wall J.D."/>
            <person name="Hazen T.C."/>
            <person name="Arkin A.P."/>
            <person name="Stahl D.A."/>
        </authorList>
    </citation>
    <scope>NUCLEOTIDE SEQUENCE [LARGE SCALE GENOMIC DNA]</scope>
    <source>
        <strain>DP4</strain>
    </source>
</reference>
<organism>
    <name type="scientific">Nitratidesulfovibrio vulgaris (strain DP4)</name>
    <name type="common">Desulfovibrio vulgaris</name>
    <dbReference type="NCBI Taxonomy" id="391774"/>
    <lineage>
        <taxon>Bacteria</taxon>
        <taxon>Pseudomonadati</taxon>
        <taxon>Thermodesulfobacteriota</taxon>
        <taxon>Desulfovibrionia</taxon>
        <taxon>Desulfovibrionales</taxon>
        <taxon>Desulfovibrionaceae</taxon>
        <taxon>Nitratidesulfovibrio</taxon>
    </lineage>
</organism>
<keyword id="KW-0030">Aminoacyl-tRNA synthetase</keyword>
<keyword id="KW-0067">ATP-binding</keyword>
<keyword id="KW-0963">Cytoplasm</keyword>
<keyword id="KW-0436">Ligase</keyword>
<keyword id="KW-0547">Nucleotide-binding</keyword>
<keyword id="KW-0648">Protein biosynthesis</keyword>
<evidence type="ECO:0000255" key="1">
    <source>
        <dbReference type="HAMAP-Rule" id="MF_00123"/>
    </source>
</evidence>
<gene>
    <name evidence="1" type="primary">argS</name>
    <name type="ordered locus">Dvul_1814</name>
</gene>
<feature type="chain" id="PRO_1000018021" description="Arginine--tRNA ligase">
    <location>
        <begin position="1"/>
        <end position="551"/>
    </location>
</feature>
<feature type="short sequence motif" description="'HIGH' region">
    <location>
        <begin position="125"/>
        <end position="135"/>
    </location>
</feature>
<sequence>MRAKKQLLAALQDIVKDMGLAWPEKATIDTPKATGFGDLAANIALVLAKQAGQNPRELATRIADALRNRDADITAIDIAGPGFLNVTYSQDFWRETILRAQEAGSAFGSSDTGAGRKVQVEYVSANPTGPLHIGHGRGAAVGDSLARIMRFAGYDVSTEYYINDAGRQMRLLGLSVWVRAKELAGRPVTLPEDFYRGDYIKDIARELMEKEPGLLDLDDAAGEDRCFAYAMNSILDGIKQDLADFRVEHQVWFSERSLVEGGAVEKTFNRLKEAGLAFEQDGALWFRTTDFGDDKDRVLRKSDGTLTYFSSDIAYHDNKYDRGFDLVVDIWGADHHGYIPRMRAAVAALGRKPEAFDVVLIQLVNLLRGGELVAMSTRAGQFETLADVVKETGADAARFMFLSRKSDSPLDFDLELVKQRTMDNPVYYVQYAHARVCSVLRKAAERGIEMPAQLDGASLAPLSGDDEMELLRLLDRFEETVAGAATALAPHHISHYLMEVAGALHSYYARQPILNATEQDVIVPRLALLRAVGCVLANGLSLLGVSAPESM</sequence>
<accession>A1VEG5</accession>
<protein>
    <recommendedName>
        <fullName evidence="1">Arginine--tRNA ligase</fullName>
        <ecNumber evidence="1">6.1.1.19</ecNumber>
    </recommendedName>
    <alternativeName>
        <fullName evidence="1">Arginyl-tRNA synthetase</fullName>
        <shortName evidence="1">ArgRS</shortName>
    </alternativeName>
</protein>
<comment type="catalytic activity">
    <reaction evidence="1">
        <text>tRNA(Arg) + L-arginine + ATP = L-arginyl-tRNA(Arg) + AMP + diphosphate</text>
        <dbReference type="Rhea" id="RHEA:20301"/>
        <dbReference type="Rhea" id="RHEA-COMP:9658"/>
        <dbReference type="Rhea" id="RHEA-COMP:9673"/>
        <dbReference type="ChEBI" id="CHEBI:30616"/>
        <dbReference type="ChEBI" id="CHEBI:32682"/>
        <dbReference type="ChEBI" id="CHEBI:33019"/>
        <dbReference type="ChEBI" id="CHEBI:78442"/>
        <dbReference type="ChEBI" id="CHEBI:78513"/>
        <dbReference type="ChEBI" id="CHEBI:456215"/>
        <dbReference type="EC" id="6.1.1.19"/>
    </reaction>
</comment>
<comment type="subunit">
    <text evidence="1">Monomer.</text>
</comment>
<comment type="subcellular location">
    <subcellularLocation>
        <location evidence="1">Cytoplasm</location>
    </subcellularLocation>
</comment>
<comment type="similarity">
    <text evidence="1">Belongs to the class-I aminoacyl-tRNA synthetase family.</text>
</comment>
<proteinExistence type="inferred from homology"/>